<protein>
    <recommendedName>
        <fullName evidence="1">Gamma-glutamyl phosphate reductase</fullName>
        <shortName evidence="1">GPR</shortName>
        <ecNumber evidence="1">1.2.1.41</ecNumber>
    </recommendedName>
    <alternativeName>
        <fullName evidence="1">Glutamate-5-semialdehyde dehydrogenase</fullName>
    </alternativeName>
    <alternativeName>
        <fullName evidence="1">Glutamyl-gamma-semialdehyde dehydrogenase</fullName>
        <shortName evidence="1">GSA dehydrogenase</shortName>
    </alternativeName>
</protein>
<feature type="chain" id="PRO_1000193598" description="Gamma-glutamyl phosphate reductase">
    <location>
        <begin position="1"/>
        <end position="426"/>
    </location>
</feature>
<sequence length="426" mass="45274">MNALNIAEYTHTLGLQAKTASAQMARAPAAIKNKALLALARLLRQNVDALQGDNARDLERARAAGLAEPMVDRLKLTPKVLETCAQGCEQLAAMPDIIGEIQGMKQQPSGIRVGQMRVPIGVFGMIYESRPNVTIEAASLSIKSGNACILRGGSEAIDSNKALARLVAQALAEAGLPEHGVQLVQTTDRAAVGQLIAMPQYVDVIIPRGGKGLIERISAEAKVPVIKHLDGNCHTYVDDPCDIVMAVQVADNAKTQKYSPCNASEGLLVARGVAAQFLPQIGAVYAAKGVEMRGCPEALAILRAVPGVQLAEATEADWSEEYLAPIISVKVVAGVDEAIAHINRYGSHHTDAILTRDHMHAQQFLRDVDSASVMVNASTRFADGFEYGLGAEIGISTDKFHARGPVGIEGLTSLKWVVLGEGEVRT</sequence>
<gene>
    <name evidence="1" type="primary">proA</name>
    <name type="ordered locus">Dtpsy_3262</name>
</gene>
<comment type="function">
    <text evidence="1">Catalyzes the NADPH-dependent reduction of L-glutamate 5-phosphate into L-glutamate 5-semialdehyde and phosphate. The product spontaneously undergoes cyclization to form 1-pyrroline-5-carboxylate.</text>
</comment>
<comment type="catalytic activity">
    <reaction evidence="1">
        <text>L-glutamate 5-semialdehyde + phosphate + NADP(+) = L-glutamyl 5-phosphate + NADPH + H(+)</text>
        <dbReference type="Rhea" id="RHEA:19541"/>
        <dbReference type="ChEBI" id="CHEBI:15378"/>
        <dbReference type="ChEBI" id="CHEBI:43474"/>
        <dbReference type="ChEBI" id="CHEBI:57783"/>
        <dbReference type="ChEBI" id="CHEBI:58066"/>
        <dbReference type="ChEBI" id="CHEBI:58274"/>
        <dbReference type="ChEBI" id="CHEBI:58349"/>
        <dbReference type="EC" id="1.2.1.41"/>
    </reaction>
</comment>
<comment type="pathway">
    <text evidence="1">Amino-acid biosynthesis; L-proline biosynthesis; L-glutamate 5-semialdehyde from L-glutamate: step 2/2.</text>
</comment>
<comment type="subcellular location">
    <subcellularLocation>
        <location evidence="1">Cytoplasm</location>
    </subcellularLocation>
</comment>
<comment type="similarity">
    <text evidence="1">Belongs to the gamma-glutamyl phosphate reductase family.</text>
</comment>
<organism>
    <name type="scientific">Acidovorax ebreus (strain TPSY)</name>
    <name type="common">Diaphorobacter sp. (strain TPSY)</name>
    <dbReference type="NCBI Taxonomy" id="535289"/>
    <lineage>
        <taxon>Bacteria</taxon>
        <taxon>Pseudomonadati</taxon>
        <taxon>Pseudomonadota</taxon>
        <taxon>Betaproteobacteria</taxon>
        <taxon>Burkholderiales</taxon>
        <taxon>Comamonadaceae</taxon>
        <taxon>Diaphorobacter</taxon>
    </lineage>
</organism>
<evidence type="ECO:0000255" key="1">
    <source>
        <dbReference type="HAMAP-Rule" id="MF_00412"/>
    </source>
</evidence>
<accession>B9MH63</accession>
<name>PROA_ACIET</name>
<reference key="1">
    <citation type="submission" date="2009-01" db="EMBL/GenBank/DDBJ databases">
        <title>Complete sequence of Diaphorobacter sp. TPSY.</title>
        <authorList>
            <consortium name="US DOE Joint Genome Institute"/>
            <person name="Lucas S."/>
            <person name="Copeland A."/>
            <person name="Lapidus A."/>
            <person name="Glavina del Rio T."/>
            <person name="Tice H."/>
            <person name="Bruce D."/>
            <person name="Goodwin L."/>
            <person name="Pitluck S."/>
            <person name="Chertkov O."/>
            <person name="Brettin T."/>
            <person name="Detter J.C."/>
            <person name="Han C."/>
            <person name="Larimer F."/>
            <person name="Land M."/>
            <person name="Hauser L."/>
            <person name="Kyrpides N."/>
            <person name="Mikhailova N."/>
            <person name="Coates J.D."/>
        </authorList>
    </citation>
    <scope>NUCLEOTIDE SEQUENCE [LARGE SCALE GENOMIC DNA]</scope>
    <source>
        <strain>TPSY</strain>
    </source>
</reference>
<proteinExistence type="inferred from homology"/>
<keyword id="KW-0028">Amino-acid biosynthesis</keyword>
<keyword id="KW-0963">Cytoplasm</keyword>
<keyword id="KW-0521">NADP</keyword>
<keyword id="KW-0560">Oxidoreductase</keyword>
<keyword id="KW-0641">Proline biosynthesis</keyword>
<keyword id="KW-1185">Reference proteome</keyword>
<dbReference type="EC" id="1.2.1.41" evidence="1"/>
<dbReference type="EMBL" id="CP001392">
    <property type="protein sequence ID" value="ACM34691.1"/>
    <property type="molecule type" value="Genomic_DNA"/>
</dbReference>
<dbReference type="RefSeq" id="WP_015914501.1">
    <property type="nucleotide sequence ID" value="NC_011992.1"/>
</dbReference>
<dbReference type="SMR" id="B9MH63"/>
<dbReference type="KEGG" id="dia:Dtpsy_3262"/>
<dbReference type="eggNOG" id="COG0014">
    <property type="taxonomic scope" value="Bacteria"/>
</dbReference>
<dbReference type="HOGENOM" id="CLU_030231_0_0_4"/>
<dbReference type="UniPathway" id="UPA00098">
    <property type="reaction ID" value="UER00360"/>
</dbReference>
<dbReference type="Proteomes" id="UP000000450">
    <property type="component" value="Chromosome"/>
</dbReference>
<dbReference type="GO" id="GO:0005737">
    <property type="term" value="C:cytoplasm"/>
    <property type="evidence" value="ECO:0007669"/>
    <property type="project" value="UniProtKB-SubCell"/>
</dbReference>
<dbReference type="GO" id="GO:0004350">
    <property type="term" value="F:glutamate-5-semialdehyde dehydrogenase activity"/>
    <property type="evidence" value="ECO:0007669"/>
    <property type="project" value="UniProtKB-UniRule"/>
</dbReference>
<dbReference type="GO" id="GO:0050661">
    <property type="term" value="F:NADP binding"/>
    <property type="evidence" value="ECO:0007669"/>
    <property type="project" value="InterPro"/>
</dbReference>
<dbReference type="GO" id="GO:0055129">
    <property type="term" value="P:L-proline biosynthetic process"/>
    <property type="evidence" value="ECO:0007669"/>
    <property type="project" value="UniProtKB-UniRule"/>
</dbReference>
<dbReference type="CDD" id="cd07079">
    <property type="entry name" value="ALDH_F18-19_ProA-GPR"/>
    <property type="match status" value="1"/>
</dbReference>
<dbReference type="FunFam" id="3.40.309.10:FF:000006">
    <property type="entry name" value="Gamma-glutamyl phosphate reductase"/>
    <property type="match status" value="1"/>
</dbReference>
<dbReference type="Gene3D" id="3.40.605.10">
    <property type="entry name" value="Aldehyde Dehydrogenase, Chain A, domain 1"/>
    <property type="match status" value="1"/>
</dbReference>
<dbReference type="Gene3D" id="3.40.309.10">
    <property type="entry name" value="Aldehyde Dehydrogenase, Chain A, domain 2"/>
    <property type="match status" value="1"/>
</dbReference>
<dbReference type="HAMAP" id="MF_00412">
    <property type="entry name" value="ProA"/>
    <property type="match status" value="1"/>
</dbReference>
<dbReference type="InterPro" id="IPR016161">
    <property type="entry name" value="Ald_DH/histidinol_DH"/>
</dbReference>
<dbReference type="InterPro" id="IPR016163">
    <property type="entry name" value="Ald_DH_C"/>
</dbReference>
<dbReference type="InterPro" id="IPR016162">
    <property type="entry name" value="Ald_DH_N"/>
</dbReference>
<dbReference type="InterPro" id="IPR015590">
    <property type="entry name" value="Aldehyde_DH_dom"/>
</dbReference>
<dbReference type="InterPro" id="IPR020593">
    <property type="entry name" value="G-glutamylP_reductase_CS"/>
</dbReference>
<dbReference type="InterPro" id="IPR012134">
    <property type="entry name" value="Glu-5-SA_DH"/>
</dbReference>
<dbReference type="InterPro" id="IPR000965">
    <property type="entry name" value="GPR_dom"/>
</dbReference>
<dbReference type="NCBIfam" id="NF001221">
    <property type="entry name" value="PRK00197.1"/>
    <property type="match status" value="1"/>
</dbReference>
<dbReference type="NCBIfam" id="TIGR00407">
    <property type="entry name" value="proA"/>
    <property type="match status" value="1"/>
</dbReference>
<dbReference type="PANTHER" id="PTHR11063:SF8">
    <property type="entry name" value="DELTA-1-PYRROLINE-5-CARBOXYLATE SYNTHASE"/>
    <property type="match status" value="1"/>
</dbReference>
<dbReference type="PANTHER" id="PTHR11063">
    <property type="entry name" value="GLUTAMATE SEMIALDEHYDE DEHYDROGENASE"/>
    <property type="match status" value="1"/>
</dbReference>
<dbReference type="Pfam" id="PF00171">
    <property type="entry name" value="Aldedh"/>
    <property type="match status" value="2"/>
</dbReference>
<dbReference type="PIRSF" id="PIRSF000151">
    <property type="entry name" value="GPR"/>
    <property type="match status" value="1"/>
</dbReference>
<dbReference type="SUPFAM" id="SSF53720">
    <property type="entry name" value="ALDH-like"/>
    <property type="match status" value="1"/>
</dbReference>
<dbReference type="PROSITE" id="PS01223">
    <property type="entry name" value="PROA"/>
    <property type="match status" value="1"/>
</dbReference>